<dbReference type="EMBL" id="CP000255">
    <property type="protein sequence ID" value="ABD22778.1"/>
    <property type="molecule type" value="Genomic_DNA"/>
</dbReference>
<dbReference type="RefSeq" id="WP_001065590.1">
    <property type="nucleotide sequence ID" value="NZ_CP027476.1"/>
</dbReference>
<dbReference type="SMR" id="Q2FDI1"/>
<dbReference type="KEGG" id="saa:SAUSA300_2613"/>
<dbReference type="HOGENOM" id="CLU_089652_0_0_9"/>
<dbReference type="OMA" id="RYYSNYP"/>
<dbReference type="UniPathway" id="UPA00031">
    <property type="reaction ID" value="UER00006"/>
</dbReference>
<dbReference type="Proteomes" id="UP000001939">
    <property type="component" value="Chromosome"/>
</dbReference>
<dbReference type="GO" id="GO:0005737">
    <property type="term" value="C:cytoplasm"/>
    <property type="evidence" value="ECO:0007669"/>
    <property type="project" value="UniProtKB-SubCell"/>
</dbReference>
<dbReference type="GO" id="GO:0140096">
    <property type="term" value="F:catalytic activity, acting on a protein"/>
    <property type="evidence" value="ECO:0007669"/>
    <property type="project" value="UniProtKB-ARBA"/>
</dbReference>
<dbReference type="GO" id="GO:0016740">
    <property type="term" value="F:transferase activity"/>
    <property type="evidence" value="ECO:0007669"/>
    <property type="project" value="UniProtKB-ARBA"/>
</dbReference>
<dbReference type="GO" id="GO:0000105">
    <property type="term" value="P:L-histidine biosynthetic process"/>
    <property type="evidence" value="ECO:0007669"/>
    <property type="project" value="UniProtKB-UniRule"/>
</dbReference>
<dbReference type="Gene3D" id="3.30.930.10">
    <property type="entry name" value="Bira Bifunctional Protein, Domain 2"/>
    <property type="match status" value="1"/>
</dbReference>
<dbReference type="HAMAP" id="MF_00125">
    <property type="entry name" value="HisZ"/>
    <property type="match status" value="1"/>
</dbReference>
<dbReference type="InterPro" id="IPR045864">
    <property type="entry name" value="aa-tRNA-synth_II/BPL/LPL"/>
</dbReference>
<dbReference type="InterPro" id="IPR041715">
    <property type="entry name" value="HisRS-like_core"/>
</dbReference>
<dbReference type="InterPro" id="IPR004517">
    <property type="entry name" value="HisZ"/>
</dbReference>
<dbReference type="NCBIfam" id="NF008947">
    <property type="entry name" value="PRK12294.1"/>
    <property type="match status" value="1"/>
</dbReference>
<dbReference type="Pfam" id="PF13393">
    <property type="entry name" value="tRNA-synt_His"/>
    <property type="match status" value="1"/>
</dbReference>
<dbReference type="SUPFAM" id="SSF55681">
    <property type="entry name" value="Class II aaRS and biotin synthetases"/>
    <property type="match status" value="1"/>
</dbReference>
<gene>
    <name evidence="1" type="primary">hisZ</name>
    <name type="ordered locus">SAUSA300_2613</name>
</gene>
<accession>Q2FDI1</accession>
<keyword id="KW-0028">Amino-acid biosynthesis</keyword>
<keyword id="KW-0963">Cytoplasm</keyword>
<keyword id="KW-0368">Histidine biosynthesis</keyword>
<protein>
    <recommendedName>
        <fullName evidence="1">ATP phosphoribosyltransferase regulatory subunit</fullName>
    </recommendedName>
</protein>
<feature type="chain" id="PRO_0000242859" description="ATP phosphoribosyltransferase regulatory subunit">
    <location>
        <begin position="1"/>
        <end position="272"/>
    </location>
</feature>
<organism>
    <name type="scientific">Staphylococcus aureus (strain USA300)</name>
    <dbReference type="NCBI Taxonomy" id="367830"/>
    <lineage>
        <taxon>Bacteria</taxon>
        <taxon>Bacillati</taxon>
        <taxon>Bacillota</taxon>
        <taxon>Bacilli</taxon>
        <taxon>Bacillales</taxon>
        <taxon>Staphylococcaceae</taxon>
        <taxon>Staphylococcus</taxon>
    </lineage>
</organism>
<name>HISZ_STAA3</name>
<sequence>MNNSEQLIALKESETAFLKYFNKADYELVDFSVVEKLDWKQLNHEDLQQMGERNFWQHEHQIYALRNDFTDQLLRYYSMYPTAATKVAYTGLIIRNNEAAVQVGLENYAPSLANVQQSLKLFIQFIQQQLRDNVHFVVLGHYQLLDALLDKSLQTPDILSMIEERNLSGLVTYLSTEHPIVQILKENTQQQLNVLEHYIPNDHPALVELKIWERWLHKQGYKDIHLDITAQPPRSYYTGLFIQCHFAENESRVLTGGYYKGSIEGFGLGLTL</sequence>
<reference key="1">
    <citation type="journal article" date="2006" name="Lancet">
        <title>Complete genome sequence of USA300, an epidemic clone of community-acquired meticillin-resistant Staphylococcus aureus.</title>
        <authorList>
            <person name="Diep B.A."/>
            <person name="Gill S.R."/>
            <person name="Chang R.F."/>
            <person name="Phan T.H."/>
            <person name="Chen J.H."/>
            <person name="Davidson M.G."/>
            <person name="Lin F."/>
            <person name="Lin J."/>
            <person name="Carleton H.A."/>
            <person name="Mongodin E.F."/>
            <person name="Sensabaugh G.F."/>
            <person name="Perdreau-Remington F."/>
        </authorList>
    </citation>
    <scope>NUCLEOTIDE SEQUENCE [LARGE SCALE GENOMIC DNA]</scope>
    <source>
        <strain>USA300</strain>
    </source>
</reference>
<comment type="function">
    <text evidence="1">Required for the first step of histidine biosynthesis. May allow the feedback regulation of ATP phosphoribosyltransferase activity by histidine.</text>
</comment>
<comment type="pathway">
    <text evidence="1">Amino-acid biosynthesis; L-histidine biosynthesis; L-histidine from 5-phospho-alpha-D-ribose 1-diphosphate: step 1/9.</text>
</comment>
<comment type="subunit">
    <text evidence="1">Heteromultimer composed of HisG and HisZ subunits.</text>
</comment>
<comment type="subcellular location">
    <subcellularLocation>
        <location evidence="1">Cytoplasm</location>
    </subcellularLocation>
</comment>
<comment type="miscellaneous">
    <text>This function is generally fulfilled by the C-terminal part of HisG, which is missing in some bacteria such as this one.</text>
</comment>
<comment type="similarity">
    <text evidence="1">Belongs to the class-II aminoacyl-tRNA synthetase family. HisZ subfamily.</text>
</comment>
<proteinExistence type="inferred from homology"/>
<evidence type="ECO:0000255" key="1">
    <source>
        <dbReference type="HAMAP-Rule" id="MF_00125"/>
    </source>
</evidence>